<reference key="1">
    <citation type="journal article" date="1997" name="Nihon Shokubutsu Byori Gakkaiho">
        <title>A possible role of RNA 2 of cucumber mosaic cucumovirus as a determinant of infection phenotype on cowpea.</title>
        <authorList>
            <person name="Karasawa A."/>
            <person name="Ito A."/>
            <person name="Okada I."/>
            <person name="Hase S."/>
            <person name="Ehara Y."/>
        </authorList>
    </citation>
    <scope>NUCLEOTIDE SEQUENCE [GENOMIC RNA]</scope>
</reference>
<name>CAPSD_CMVII</name>
<gene>
    <name type="ORF">ORF3b</name>
</gene>
<comment type="function">
    <text evidence="1">Capsid protein. Probably binds RNA and plays a role in packaging (By similarity).</text>
</comment>
<comment type="subcellular location">
    <subcellularLocation>
        <location evidence="3">Virion</location>
    </subcellularLocation>
</comment>
<comment type="domain">
    <text evidence="1">The N-terminal arginine-rich stretch does not seem to be the major RNA-binding region that allows formation of an infectious ribonucleoprotein complex.</text>
</comment>
<comment type="similarity">
    <text evidence="3">Belongs to the cucumovirus capsid protein family.</text>
</comment>
<proteinExistence type="inferred from homology"/>
<organismHost>
    <name type="scientific">Cucumis sativus</name>
    <name type="common">Cucumber</name>
    <dbReference type="NCBI Taxonomy" id="3659"/>
</organismHost>
<organismHost>
    <name type="scientific">Solanum lycopersicum</name>
    <name type="common">Tomato</name>
    <name type="synonym">Lycopersicon esculentum</name>
    <dbReference type="NCBI Taxonomy" id="4081"/>
</organismHost>
<organismHost>
    <name type="scientific">Spinacia oleracea</name>
    <name type="common">Spinach</name>
    <dbReference type="NCBI Taxonomy" id="3562"/>
</organismHost>
<dbReference type="EMBL" id="D16405">
    <property type="protein sequence ID" value="BAA03889.1"/>
    <property type="molecule type" value="Genomic_RNA"/>
</dbReference>
<dbReference type="SMR" id="Q83271"/>
<dbReference type="Proteomes" id="UP000246914">
    <property type="component" value="Genome"/>
</dbReference>
<dbReference type="GO" id="GO:1990904">
    <property type="term" value="C:ribonucleoprotein complex"/>
    <property type="evidence" value="ECO:0007669"/>
    <property type="project" value="UniProtKB-KW"/>
</dbReference>
<dbReference type="GO" id="GO:0039617">
    <property type="term" value="C:T=3 icosahedral viral capsid"/>
    <property type="evidence" value="ECO:0007669"/>
    <property type="project" value="UniProtKB-KW"/>
</dbReference>
<dbReference type="GO" id="GO:0019013">
    <property type="term" value="C:viral nucleocapsid"/>
    <property type="evidence" value="ECO:0007669"/>
    <property type="project" value="UniProtKB-KW"/>
</dbReference>
<dbReference type="GO" id="GO:0003723">
    <property type="term" value="F:RNA binding"/>
    <property type="evidence" value="ECO:0007669"/>
    <property type="project" value="UniProtKB-KW"/>
</dbReference>
<dbReference type="GO" id="GO:0005198">
    <property type="term" value="F:structural molecule activity"/>
    <property type="evidence" value="ECO:0007669"/>
    <property type="project" value="InterPro"/>
</dbReference>
<dbReference type="Gene3D" id="2.60.120.530">
    <property type="entry name" value="Cucumovirus coat protein, subunit A"/>
    <property type="match status" value="1"/>
</dbReference>
<dbReference type="InterPro" id="IPR000247">
    <property type="entry name" value="Cucumovirus_coat"/>
</dbReference>
<dbReference type="InterPro" id="IPR037137">
    <property type="entry name" value="Cucumovirus_coat_Asu_sf"/>
</dbReference>
<dbReference type="Pfam" id="PF00760">
    <property type="entry name" value="Cucumo_coat"/>
    <property type="match status" value="1"/>
</dbReference>
<dbReference type="PRINTS" id="PR00222">
    <property type="entry name" value="CUCUMOCOAT"/>
</dbReference>
<dbReference type="SUPFAM" id="SSF88633">
    <property type="entry name" value="Positive stranded ssRNA viruses"/>
    <property type="match status" value="1"/>
</dbReference>
<accession>Q83271</accession>
<feature type="chain" id="PRO_0000083207" description="Capsid protein">
    <location>
        <begin position="1"/>
        <end position="218"/>
    </location>
</feature>
<feature type="region of interest" description="Disordered" evidence="2">
    <location>
        <begin position="1"/>
        <end position="30"/>
    </location>
</feature>
<feature type="compositionally biased region" description="Basic residues" evidence="2">
    <location>
        <begin position="11"/>
        <end position="21"/>
    </location>
</feature>
<feature type="modified residue" description="N-acetylmethionine; by host" evidence="1">
    <location>
        <position position="1"/>
    </location>
</feature>
<sequence length="218" mass="24145">MDKSESTSAGRNRRRRPRRGSRSAPSSSDANFRVLSQQLSRLNKTLAAGRPTINHPTFVGSERCKPGYTFTSITLKPPKIDRGSYYGKRLLLPDSVMEYDKKLVSRIQIRVNPLPKFDSTVWVTVRKVPASSDLSVAAISAMFADGASPVLVYQYAASGVQANNKLLYDLSAMRADIGDMRKYAVLVYSKDDALETDELVLHVDVEHQRIPTSGVLPV</sequence>
<keyword id="KW-0007">Acetylation</keyword>
<keyword id="KW-0167">Capsid protein</keyword>
<keyword id="KW-0687">Ribonucleoprotein</keyword>
<keyword id="KW-0694">RNA-binding</keyword>
<keyword id="KW-1142">T=3 icosahedral capsid protein</keyword>
<keyword id="KW-0543">Viral nucleoprotein</keyword>
<keyword id="KW-0946">Virion</keyword>
<protein>
    <recommendedName>
        <fullName>Capsid protein</fullName>
        <shortName>CP</shortName>
    </recommendedName>
    <alternativeName>
        <fullName>Coat protein</fullName>
    </alternativeName>
</protein>
<organism>
    <name type="scientific">Cucumber mosaic virus (strain Iizuka)</name>
    <name type="common">CMV</name>
    <dbReference type="NCBI Taxonomy" id="117113"/>
    <lineage>
        <taxon>Viruses</taxon>
        <taxon>Riboviria</taxon>
        <taxon>Orthornavirae</taxon>
        <taxon>Kitrinoviricota</taxon>
        <taxon>Alsuviricetes</taxon>
        <taxon>Martellivirales</taxon>
        <taxon>Bromoviridae</taxon>
        <taxon>Cucumovirus</taxon>
        <taxon>Cucumber mosaic virus</taxon>
    </lineage>
</organism>
<evidence type="ECO:0000250" key="1"/>
<evidence type="ECO:0000256" key="2">
    <source>
        <dbReference type="SAM" id="MobiDB-lite"/>
    </source>
</evidence>
<evidence type="ECO:0000305" key="3"/>